<gene>
    <name evidence="3" type="primary">tseL</name>
    <name type="ordered locus">VC_1418</name>
</gene>
<comment type="function">
    <text evidence="1 2">Toxin secreted by the type VI (T6SS) secretion system that acts on prokaryotic as well as eukaryotic target cells.</text>
</comment>
<comment type="subunit">
    <text evidence="1">Interacts with VgrG3; this interaction allows TseL secretion to target cells.</text>
</comment>
<comment type="subcellular location">
    <subcellularLocation>
        <location evidence="1">Secreted</location>
    </subcellularLocation>
    <text evidence="1">Delivered to the target cell by the type VI (T6SS) secretion system in a VgrG3-dependent pathway.</text>
</comment>
<comment type="disruption phenotype">
    <text evidence="1">Deletion does not abolish killing activity. However, triple mutant lacking tseL, vasX, and vgrG3 fails to kill Escherichia coli.</text>
</comment>
<name>TSEL_VIBCH</name>
<organism>
    <name type="scientific">Vibrio cholerae serotype O1 (strain ATCC 39315 / El Tor Inaba N16961)</name>
    <dbReference type="NCBI Taxonomy" id="243277"/>
    <lineage>
        <taxon>Bacteria</taxon>
        <taxon>Pseudomonadati</taxon>
        <taxon>Pseudomonadota</taxon>
        <taxon>Gammaproteobacteria</taxon>
        <taxon>Vibrionales</taxon>
        <taxon>Vibrionaceae</taxon>
        <taxon>Vibrio</taxon>
    </lineage>
</organism>
<dbReference type="EMBL" id="AE003852">
    <property type="protein sequence ID" value="AAF94575.1"/>
    <property type="molecule type" value="Genomic_DNA"/>
</dbReference>
<dbReference type="PIR" id="F82202">
    <property type="entry name" value="F82202"/>
</dbReference>
<dbReference type="RefSeq" id="NP_231061.1">
    <property type="nucleotide sequence ID" value="NC_002505.1"/>
</dbReference>
<dbReference type="RefSeq" id="WP_000376836.1">
    <property type="nucleotide sequence ID" value="NZ_LT906614.1"/>
</dbReference>
<dbReference type="STRING" id="243277.VC_1418"/>
<dbReference type="ESTHER" id="vibch-VC1418">
    <property type="family name" value="Lipase_3"/>
</dbReference>
<dbReference type="TCDB" id="1.C.132.1.1">
    <property type="family name" value="the tsel toxin (tsel) family"/>
</dbReference>
<dbReference type="DNASU" id="2614050"/>
<dbReference type="EnsemblBacteria" id="AAF94575">
    <property type="protein sequence ID" value="AAF94575"/>
    <property type="gene ID" value="VC_1418"/>
</dbReference>
<dbReference type="KEGG" id="vch:VC_1418"/>
<dbReference type="PATRIC" id="fig|243277.26.peg.1347"/>
<dbReference type="eggNOG" id="COG3675">
    <property type="taxonomic scope" value="Bacteria"/>
</dbReference>
<dbReference type="HOGENOM" id="CLU_033066_0_0_6"/>
<dbReference type="Proteomes" id="UP000000584">
    <property type="component" value="Chromosome 1"/>
</dbReference>
<dbReference type="GO" id="GO:0005576">
    <property type="term" value="C:extracellular region"/>
    <property type="evidence" value="ECO:0007669"/>
    <property type="project" value="UniProtKB-SubCell"/>
</dbReference>
<dbReference type="GO" id="GO:0006629">
    <property type="term" value="P:lipid metabolic process"/>
    <property type="evidence" value="ECO:0007669"/>
    <property type="project" value="InterPro"/>
</dbReference>
<dbReference type="CDD" id="cd00519">
    <property type="entry name" value="Lipase_3"/>
    <property type="match status" value="1"/>
</dbReference>
<dbReference type="Gene3D" id="3.40.50.1820">
    <property type="entry name" value="alpha/beta hydrolase"/>
    <property type="match status" value="1"/>
</dbReference>
<dbReference type="InterPro" id="IPR029058">
    <property type="entry name" value="AB_hydrolase_fold"/>
</dbReference>
<dbReference type="InterPro" id="IPR002921">
    <property type="entry name" value="Fungal_lipase-type"/>
</dbReference>
<dbReference type="InterPro" id="IPR051218">
    <property type="entry name" value="Sec_MonoDiacylglyc_Lipase"/>
</dbReference>
<dbReference type="PANTHER" id="PTHR45856">
    <property type="entry name" value="ALPHA/BETA-HYDROLASES SUPERFAMILY PROTEIN"/>
    <property type="match status" value="1"/>
</dbReference>
<dbReference type="PANTHER" id="PTHR45856:SF24">
    <property type="entry name" value="FUNGAL LIPASE-LIKE DOMAIN-CONTAINING PROTEIN"/>
    <property type="match status" value="1"/>
</dbReference>
<dbReference type="Pfam" id="PF01764">
    <property type="entry name" value="Lipase_3"/>
    <property type="match status" value="1"/>
</dbReference>
<dbReference type="SUPFAM" id="SSF53474">
    <property type="entry name" value="alpha/beta-Hydrolases"/>
    <property type="match status" value="1"/>
</dbReference>
<protein>
    <recommendedName>
        <fullName evidence="3">Toxin TseL</fullName>
    </recommendedName>
</protein>
<accession>Q9KS43</accession>
<sequence length="641" mass="72238">MDSFNYCVQCNPEENWLELEFRSENDEPIDGLLVTITNQSAPSNTYTQTTSSGKVLFGKIAAGEWRASVSQASLLTEVEKYASRKEGQESPVKKRAAAELDAADKDTKQYRFTTIGDFWDEAPKDEFLQKQHKGIDVNASAEKAGFRLSHNQTYVFEIKALRSYMPVIIDTDEFNLVNSYTFALLSKLAYATNDFNRDDGKTIDNQGAISTVISQLKRKERPTYSGDLQAKWLLEEIPYSKALSAQYYAEDDVGSEGYIIFNDELAIIGVRGTEPYFQSKKPPVDNTKFKIIKAASGMAAVIADKIESATDSPGMKDLIITDLDAAQIAPEEFGGTYVHRGFYQYTMALLSLMEKDLGLHKIKKFYCCGHSLGGAGALLISALIKDSYHPPVLRLYTYGMPRVGTRSFVERYQNILHYRHVNNHDLVPQIPTVWMNTDVSEGFHVLDVFKSRVDLMRKMLTDDDDDNYQHHGHLSQLLTYNSNNQVLLTPKQTQVTMLDLANLATNDSVAMVDGLSDASIVEHGMEQYIPNLFEQLTALSDESLMVHYQRAISALEQEIATLQQSYLTVKQAWIESIGNGTPTMNIGRLMSEMHSINKLIENRNKIRGELRQIVSDPQRMPATKFLISQQTLPDEIKVQIR</sequence>
<keyword id="KW-1185">Reference proteome</keyword>
<keyword id="KW-0964">Secreted</keyword>
<keyword id="KW-0843">Virulence</keyword>
<reference key="1">
    <citation type="journal article" date="2000" name="Nature">
        <title>DNA sequence of both chromosomes of the cholera pathogen Vibrio cholerae.</title>
        <authorList>
            <person name="Heidelberg J.F."/>
            <person name="Eisen J.A."/>
            <person name="Nelson W.C."/>
            <person name="Clayton R.A."/>
            <person name="Gwinn M.L."/>
            <person name="Dodson R.J."/>
            <person name="Haft D.H."/>
            <person name="Hickey E.K."/>
            <person name="Peterson J.D."/>
            <person name="Umayam L.A."/>
            <person name="Gill S.R."/>
            <person name="Nelson K.E."/>
            <person name="Read T.D."/>
            <person name="Tettelin H."/>
            <person name="Richardson D.L."/>
            <person name="Ermolaeva M.D."/>
            <person name="Vamathevan J.J."/>
            <person name="Bass S."/>
            <person name="Qin H."/>
            <person name="Dragoi I."/>
            <person name="Sellers P."/>
            <person name="McDonald L.A."/>
            <person name="Utterback T.R."/>
            <person name="Fleischmann R.D."/>
            <person name="Nierman W.C."/>
            <person name="White O."/>
            <person name="Salzberg S.L."/>
            <person name="Smith H.O."/>
            <person name="Colwell R.R."/>
            <person name="Mekalanos J.J."/>
            <person name="Venter J.C."/>
            <person name="Fraser C.M."/>
        </authorList>
    </citation>
    <scope>NUCLEOTIDE SEQUENCE [LARGE SCALE GENOMIC DNA]</scope>
    <source>
        <strain>ATCC 39315 / El Tor Inaba N16961</strain>
    </source>
</reference>
<reference key="2">
    <citation type="journal article" date="2013" name="Proc. Natl. Acad. Sci. U.S.A.">
        <title>Identification of T6SS-dependent effector and immunity proteins by Tn-seq in Vibrio cholerae.</title>
        <authorList>
            <person name="Dong T.G."/>
            <person name="Ho B.T."/>
            <person name="Yoder-Himes D.R."/>
            <person name="Mekalanos J.J."/>
        </authorList>
    </citation>
    <scope>FUNCTION</scope>
    <scope>INTERACTION WITH VGRG3</scope>
    <scope>SUBCELLULAR LOCATION</scope>
    <scope>DISRUPTION PHENOTYPE</scope>
    <source>
        <strain>V52</strain>
    </source>
</reference>
<reference key="3">
    <citation type="journal article" date="2013" name="PLoS Pathog.">
        <title>Dual expression profile of type VI secretion system immunity genes protects pandemic Vibrio cholerae.</title>
        <authorList>
            <person name="Miyata S.T."/>
            <person name="Unterweger D."/>
            <person name="Rudko S.P."/>
            <person name="Pukatzki S."/>
        </authorList>
    </citation>
    <scope>FUNCTION</scope>
</reference>
<proteinExistence type="evidence at protein level"/>
<feature type="chain" id="PRO_0000449206" description="Toxin TseL">
    <location>
        <begin position="1"/>
        <end position="641"/>
    </location>
</feature>
<evidence type="ECO:0000269" key="1">
    <source>
    </source>
</evidence>
<evidence type="ECO:0000269" key="2">
    <source>
    </source>
</evidence>
<evidence type="ECO:0000303" key="3">
    <source>
    </source>
</evidence>